<name>USA1_YEAST</name>
<keyword id="KW-0002">3D-structure</keyword>
<keyword id="KW-0256">Endoplasmic reticulum</keyword>
<keyword id="KW-0472">Membrane</keyword>
<keyword id="KW-0597">Phosphoprotein</keyword>
<keyword id="KW-1185">Reference proteome</keyword>
<keyword id="KW-0812">Transmembrane</keyword>
<keyword id="KW-1133">Transmembrane helix</keyword>
<accession>Q03714</accession>
<accession>D6VZE5</accession>
<evidence type="ECO:0000255" key="1"/>
<evidence type="ECO:0000255" key="2">
    <source>
        <dbReference type="PROSITE-ProRule" id="PRU00214"/>
    </source>
</evidence>
<evidence type="ECO:0000256" key="3">
    <source>
        <dbReference type="SAM" id="MobiDB-lite"/>
    </source>
</evidence>
<evidence type="ECO:0000269" key="4">
    <source>
    </source>
</evidence>
<evidence type="ECO:0000269" key="5">
    <source>
    </source>
</evidence>
<evidence type="ECO:0000269" key="6">
    <source>
    </source>
</evidence>
<evidence type="ECO:0000269" key="7">
    <source>
    </source>
</evidence>
<evidence type="ECO:0000269" key="8">
    <source>
    </source>
</evidence>
<evidence type="ECO:0000269" key="9">
    <source>
    </source>
</evidence>
<evidence type="ECO:0000269" key="10">
    <source>
    </source>
</evidence>
<evidence type="ECO:0007744" key="11">
    <source>
        <dbReference type="PDB" id="6VJZ"/>
    </source>
</evidence>
<evidence type="ECO:0007744" key="12">
    <source>
        <dbReference type="PDB" id="6VK0"/>
    </source>
</evidence>
<evidence type="ECO:0007744" key="13">
    <source>
    </source>
</evidence>
<evidence type="ECO:0007744" key="14">
    <source>
    </source>
</evidence>
<proteinExistence type="evidence at protein level"/>
<reference key="1">
    <citation type="journal article" date="1997" name="Nature">
        <title>The nucleotide sequence of Saccharomyces cerevisiae chromosome XIII.</title>
        <authorList>
            <person name="Bowman S."/>
            <person name="Churcher C.M."/>
            <person name="Badcock K."/>
            <person name="Brown D."/>
            <person name="Chillingworth T."/>
            <person name="Connor R."/>
            <person name="Dedman K."/>
            <person name="Devlin K."/>
            <person name="Gentles S."/>
            <person name="Hamlin N."/>
            <person name="Hunt S."/>
            <person name="Jagels K."/>
            <person name="Lye G."/>
            <person name="Moule S."/>
            <person name="Odell C."/>
            <person name="Pearson D."/>
            <person name="Rajandream M.A."/>
            <person name="Rice P."/>
            <person name="Skelton J."/>
            <person name="Walsh S.V."/>
            <person name="Whitehead S."/>
            <person name="Barrell B.G."/>
        </authorList>
    </citation>
    <scope>NUCLEOTIDE SEQUENCE [LARGE SCALE GENOMIC DNA]</scope>
    <source>
        <strain>ATCC 204508 / S288c</strain>
    </source>
</reference>
<reference key="2">
    <citation type="journal article" date="2014" name="G3 (Bethesda)">
        <title>The reference genome sequence of Saccharomyces cerevisiae: Then and now.</title>
        <authorList>
            <person name="Engel S.R."/>
            <person name="Dietrich F.S."/>
            <person name="Fisk D.G."/>
            <person name="Binkley G."/>
            <person name="Balakrishnan R."/>
            <person name="Costanzo M.C."/>
            <person name="Dwight S.S."/>
            <person name="Hitz B.C."/>
            <person name="Karra K."/>
            <person name="Nash R.S."/>
            <person name="Weng S."/>
            <person name="Wong E.D."/>
            <person name="Lloyd P."/>
            <person name="Skrzypek M.S."/>
            <person name="Miyasato S.R."/>
            <person name="Simison M."/>
            <person name="Cherry J.M."/>
        </authorList>
    </citation>
    <scope>GENOME REANNOTATION</scope>
    <source>
        <strain>ATCC 204508 / S288c</strain>
    </source>
</reference>
<reference key="3">
    <citation type="journal article" date="2003" name="Nature">
        <title>Global analysis of protein expression in yeast.</title>
        <authorList>
            <person name="Ghaemmaghami S."/>
            <person name="Huh W.-K."/>
            <person name="Bower K."/>
            <person name="Howson R.W."/>
            <person name="Belle A."/>
            <person name="Dephoure N."/>
            <person name="O'Shea E.K."/>
            <person name="Weissman J.S."/>
        </authorList>
    </citation>
    <scope>LEVEL OF PROTEIN EXPRESSION [LARGE SCALE ANALYSIS]</scope>
</reference>
<reference key="4">
    <citation type="journal article" date="2006" name="Cell">
        <title>Distinct ubiquitin-ligase complexes define convergent pathways for the degradation of ER proteins.</title>
        <authorList>
            <person name="Carvalho P."/>
            <person name="Goder V."/>
            <person name="Rapoport T.A."/>
        </authorList>
    </citation>
    <scope>FUNCTION</scope>
    <scope>IDENTIFICATION IN THE HRD1 COMPLEX</scope>
    <scope>DISRUPTION PHENOTYPE</scope>
</reference>
<reference key="5">
    <citation type="journal article" date="2006" name="Proc. Natl. Acad. Sci. U.S.A.">
        <title>A global topology map of the Saccharomyces cerevisiae membrane proteome.</title>
        <authorList>
            <person name="Kim H."/>
            <person name="Melen K."/>
            <person name="Oesterberg M."/>
            <person name="von Heijne G."/>
        </authorList>
    </citation>
    <scope>TOPOLOGY [LARGE SCALE ANALYSIS]</scope>
    <source>
        <strain>ATCC 208353 / W303-1A</strain>
    </source>
</reference>
<reference key="6">
    <citation type="journal article" date="2007" name="J. Proteome Res.">
        <title>Large-scale phosphorylation analysis of alpha-factor-arrested Saccharomyces cerevisiae.</title>
        <authorList>
            <person name="Li X."/>
            <person name="Gerber S.A."/>
            <person name="Rudner A.D."/>
            <person name="Beausoleil S.A."/>
            <person name="Haas W."/>
            <person name="Villen J."/>
            <person name="Elias J.E."/>
            <person name="Gygi S.P."/>
        </authorList>
    </citation>
    <scope>PHOSPHORYLATION [LARGE SCALE ANALYSIS] AT SER-376 AND SER-379</scope>
    <scope>IDENTIFICATION BY MASS SPECTROMETRY [LARGE SCALE ANALYSIS]</scope>
    <source>
        <strain>ADR376</strain>
    </source>
</reference>
<reference key="7">
    <citation type="journal article" date="2008" name="Mol. Cell. Proteomics">
        <title>A multidimensional chromatography technology for in-depth phosphoproteome analysis.</title>
        <authorList>
            <person name="Albuquerque C.P."/>
            <person name="Smolka M.B."/>
            <person name="Payne S.H."/>
            <person name="Bafna V."/>
            <person name="Eng J."/>
            <person name="Zhou H."/>
        </authorList>
    </citation>
    <scope>IDENTIFICATION BY MASS SPECTROMETRY [LARGE SCALE ANALYSIS]</scope>
</reference>
<reference key="8">
    <citation type="journal article" date="2009" name="Mol. Cell">
        <title>Usa1 functions as a scaffold of the HRD-ubiquitin ligase.</title>
        <authorList>
            <person name="Horn S.C."/>
            <person name="Hanna J."/>
            <person name="Hirsch C."/>
            <person name="Volkwein C."/>
            <person name="Schutz A."/>
            <person name="Heinemann U."/>
            <person name="Sommer T."/>
            <person name="Jarosch E."/>
        </authorList>
    </citation>
    <scope>FUNCTION</scope>
    <scope>INTERACTION WITH DER1 AND HRD1</scope>
    <scope>DISRUPTION PHENOTYPE</scope>
</reference>
<reference key="9">
    <citation type="journal article" date="2009" name="PLoS ONE">
        <title>Usa1 protein facilitates substrate ubiquitylation through two separate domains.</title>
        <authorList>
            <person name="Kim I."/>
            <person name="Li Y."/>
            <person name="Muniz P."/>
            <person name="Rao H."/>
        </authorList>
    </citation>
    <scope>FUNCTION</scope>
    <scope>INTERACTION WITH HRD1 AND HRD3</scope>
    <scope>SUBCELLULAR LOCATION</scope>
    <scope>DISRUPTION PHENOTYPE</scope>
    <scope>CHARACTERIZATION OF UBIQUITIN-LIKE DOMAIN</scope>
    <scope>CHARACTERIZATION OF FUNCTIONAL REGIONS</scope>
</reference>
<reference key="10">
    <citation type="journal article" date="2009" name="Science">
        <title>Global analysis of Cdk1 substrate phosphorylation sites provides insights into evolution.</title>
        <authorList>
            <person name="Holt L.J."/>
            <person name="Tuch B.B."/>
            <person name="Villen J."/>
            <person name="Johnson A.D."/>
            <person name="Gygi S.P."/>
            <person name="Morgan D.O."/>
        </authorList>
    </citation>
    <scope>PHOSPHORYLATION [LARGE SCALE ANALYSIS] AT SER-374; SER-376 AND SER-379</scope>
    <scope>IDENTIFICATION BY MASS SPECTROMETRY [LARGE SCALE ANALYSIS]</scope>
</reference>
<reference key="11">
    <citation type="journal article" date="2010" name="Cell">
        <title>Retrotranslocation of a misfolded luminal ER protein by the ubiquitin-ligase Hrd1p.</title>
        <authorList>
            <person name="Carvalho P."/>
            <person name="Stanley A.M."/>
            <person name="Rapoport T.A."/>
        </authorList>
    </citation>
    <scope>FUNCTION</scope>
    <scope>INTERACTION WITH HRD1</scope>
    <scope>DISRUPTION PHENOTYPE</scope>
    <scope>CHARACTERIZATION OF UBIQUITIN-LIKE DOMAIN</scope>
    <scope>CHARACTERIZATION OF FUNCTIONAL REGIONS</scope>
</reference>
<reference key="12">
    <citation type="journal article" date="2010" name="J. Biol. Chem.">
        <title>Usa1p is required for optimal function and regulation of the Hrd1p endoplasmic reticulum-associated degradation ubiquitin ligase.</title>
        <authorList>
            <person name="Carroll S.M."/>
            <person name="Hampton R.Y."/>
        </authorList>
    </citation>
    <scope>FUNCTION</scope>
    <scope>DISRUPTION PHENOTYPE</scope>
    <scope>CHARACTERIZATION OF UBIQUITIN-LIKE DOMAIN</scope>
</reference>
<reference evidence="11 12" key="13">
    <citation type="journal article" date="2020" name="Science">
        <title>Structural basis of ER-associated protein degradation mediated by the Hrd1 ubiquitin ligase complex.</title>
        <authorList>
            <person name="Wu X."/>
            <person name="Siggel M."/>
            <person name="Ovchinnikov S."/>
            <person name="Mi W."/>
            <person name="Svetlov V."/>
            <person name="Nudler E."/>
            <person name="Liao M."/>
            <person name="Hummer G."/>
            <person name="Rapoport T.A."/>
        </authorList>
    </citation>
    <scope>STRUCTURE BY ELECTRON MICROSCOPY (4.10 ANGSTROMS) OF 500-838 IN COMPLEX WITH DER1; HRD1 AND HRD3</scope>
    <scope>INTERACTION WITH DER1</scope>
</reference>
<organism>
    <name type="scientific">Saccharomyces cerevisiae (strain ATCC 204508 / S288c)</name>
    <name type="common">Baker's yeast</name>
    <dbReference type="NCBI Taxonomy" id="559292"/>
    <lineage>
        <taxon>Eukaryota</taxon>
        <taxon>Fungi</taxon>
        <taxon>Dikarya</taxon>
        <taxon>Ascomycota</taxon>
        <taxon>Saccharomycotina</taxon>
        <taxon>Saccharomycetes</taxon>
        <taxon>Saccharomycetales</taxon>
        <taxon>Saccharomycetaceae</taxon>
        <taxon>Saccharomyces</taxon>
    </lineage>
</organism>
<feature type="chain" id="PRO_0000114926" description="U1 SNP1-associating protein 1">
    <location>
        <begin position="1"/>
        <end position="838"/>
    </location>
</feature>
<feature type="topological domain" description="Cytoplasmic" evidence="1">
    <location>
        <begin position="1"/>
        <end position="536"/>
    </location>
</feature>
<feature type="transmembrane region" description="Helical" evidence="1">
    <location>
        <begin position="537"/>
        <end position="559"/>
    </location>
</feature>
<feature type="topological domain" description="Extracellular" evidence="1">
    <location>
        <begin position="560"/>
        <end position="563"/>
    </location>
</feature>
<feature type="transmembrane region" description="Helical" evidence="1">
    <location>
        <begin position="564"/>
        <end position="583"/>
    </location>
</feature>
<feature type="topological domain" description="Cytoplasmic" evidence="1">
    <location>
        <begin position="584"/>
        <end position="838"/>
    </location>
</feature>
<feature type="domain" description="Ubiquitin-like" evidence="2">
    <location>
        <begin position="259"/>
        <end position="318"/>
    </location>
</feature>
<feature type="region of interest" description="Required for ERAD-L function">
    <location>
        <begin position="31"/>
        <end position="240"/>
    </location>
</feature>
<feature type="region of interest" description="Important for HRD1 oligomer formation">
    <location>
        <begin position="319"/>
        <end position="418"/>
    </location>
</feature>
<feature type="region of interest" description="Interaction with HRD1">
    <location>
        <begin position="345"/>
        <end position="535"/>
    </location>
</feature>
<feature type="region of interest" description="Required for ERAD-L function and HRD1 oligomer formation">
    <location>
        <begin position="437"/>
        <end position="490"/>
    </location>
</feature>
<feature type="region of interest" description="Interaction with DER1">
    <location>
        <begin position="584"/>
        <end position="838"/>
    </location>
</feature>
<feature type="region of interest" description="Disordered" evidence="3">
    <location>
        <begin position="795"/>
        <end position="838"/>
    </location>
</feature>
<feature type="compositionally biased region" description="Acidic residues" evidence="3">
    <location>
        <begin position="809"/>
        <end position="823"/>
    </location>
</feature>
<feature type="modified residue" description="Phosphoserine" evidence="14">
    <location>
        <position position="374"/>
    </location>
</feature>
<feature type="modified residue" description="Phosphoserine" evidence="13 14">
    <location>
        <position position="376"/>
    </location>
</feature>
<feature type="modified residue" description="Phosphoserine" evidence="13 14">
    <location>
        <position position="379"/>
    </location>
</feature>
<comment type="function">
    <text evidence="5 6 7 8 9">Scaffold protein of the endoplasmic reticulum-associated degradation (ERAD) (also known as endoplasmic reticulum quality control, ERQC) pathway involved in ubiquitin-dependent degradation of misfolded endoplasmic reticulum proteins. Component of the HRD1 ubiquitin ligase complex, which is part of the ERAD-L and ERAD-M pathways responsible for the rapid degradation of soluble lumenal and membrane proteins with misfolded lumenal domains (ERAD-L), or ER-membrane proteins with misfolded transmembrane domains (ERAD-M). Has multiple functions in ERAD including recruitment of DER1 to the HRD1 ubiquitin ligase, and regulation of HRD1 activity. Involved in oligomerization of HRD1 and in HRD1 autoubiquitination and degradation.</text>
</comment>
<comment type="subunit">
    <text evidence="5 6 8 9 10">Component of the HRD1 ubiquitin ligase complex which contains the E3 ligase HRD1, its cofactors HRD3, USA1 and DER1, substrate recruiting factor YOS9 and CDC48-binding protein UBX2 (PubMed:16873066). Within the complex, interacts directly with HRD1 (via N-terminus) and DER1 (via C-terminus) and indirectly with HRD3 (PubMed:19898607, PubMed:20005842, PubMed:21074049, PubMed:32327568). In ERAD-L, HRD3 and YOS9 jointly bind misfolded glycoproteins in the endoplasmic reticulum (ER) lumen (PubMed:32327568). Movement of ERAD-L substrates through the ER membrane is facilitated by HRD1 and DER1 which have lateral gates facing each other and which distort the membrane region between the lateral gates, making it much thinner than a normal phospholipid bilayer (PubMed:32327568). Substrates insert into the membrane as a hairpin loop with one strand interacting with DER1 and the other with HRD1 (PubMed:32327568). The HRD1 complex interacts with the heterotrimeric CDC48-NPL4-UFD1 ATPase complex which is recruited by UBX2 via its interaction with CDC48 and which moves ubiquitinated substrates to the cytosol for targeting to the proteasome (PubMed:16873066).</text>
</comment>
<comment type="interaction">
    <interactant intactId="EBI-27760">
        <id>Q03714</id>
    </interactant>
    <interactant intactId="EBI-5761">
        <id>P38307</id>
        <label>DER1</label>
    </interactant>
    <organismsDiffer>false</organismsDiffer>
    <experiments>3</experiments>
</comment>
<comment type="interaction">
    <interactant intactId="EBI-27760">
        <id>Q03714</id>
    </interactant>
    <interactant intactId="EBI-27730">
        <id>Q04228</id>
        <label>UBX2</label>
    </interactant>
    <organismsDiffer>false</organismsDiffer>
    <experiments>2</experiments>
</comment>
<comment type="interaction">
    <interactant intactId="EBI-27760">
        <id>Q03714</id>
    </interactant>
    <interactant intactId="EBI-27760">
        <id>Q03714</id>
        <label>USA1</label>
    </interactant>
    <organismsDiffer>false</organismsDiffer>
    <experiments>2</experiments>
</comment>
<comment type="subcellular location">
    <subcellularLocation>
        <location evidence="6">Endoplasmic reticulum membrane</location>
        <topology evidence="6">Multi-pass membrane protein</topology>
    </subcellularLocation>
</comment>
<comment type="domain">
    <text evidence="7 8 9">The ubiquitin-like domain is required for HRD1 trans-ubiquitination and degradation. Reported to be involved in ERAD-M but not ERAD-L function (PubMed:20005842). However, a contradictory report states that it is not required for either ERAD-L or ERAD-M function (PubMed:19940128). Reported to be required for HRD1 oligomer formation (PubMed:19940128). However, a contradictory report does not observe any defects in oligomerization following deletion of the domain (PubMed:21074049).</text>
</comment>
<comment type="disruption phenotype">
    <text evidence="5 6 7 8 9">Impaired degradation of proteins with misfolded lumenal domains such as CPY*, a mutant, misfolded form of carboxypeptidase Y which is a known ERAD-L substrate. Impaired degradation of proteins with misfolded intramembrane domains. Impaired trans-ubiquitination and degradation of the HRD1 ligase. Degradation of proteins with misfolded cytosolic domains is not affected. Interaction of substrate with HRD1 is reduced; in USA1 and YOS9 double mutants this interaction is completely abolished.</text>
</comment>
<comment type="miscellaneous">
    <text evidence="4">Present with 1890 molecules/cell in log phase SD medium.</text>
</comment>
<dbReference type="EMBL" id="Z46659">
    <property type="protein sequence ID" value="CAA86626.1"/>
    <property type="molecule type" value="Genomic_DNA"/>
</dbReference>
<dbReference type="EMBL" id="BK006946">
    <property type="protein sequence ID" value="DAA09869.1"/>
    <property type="molecule type" value="Genomic_DNA"/>
</dbReference>
<dbReference type="PIR" id="S49750">
    <property type="entry name" value="S49750"/>
</dbReference>
<dbReference type="RefSeq" id="NP_013683.1">
    <property type="nucleotide sequence ID" value="NM_001182387.1"/>
</dbReference>
<dbReference type="PDB" id="6VJZ">
    <property type="method" value="EM"/>
    <property type="resolution" value="4.30 A"/>
    <property type="chains" value="D=500-838"/>
</dbReference>
<dbReference type="PDB" id="6VK0">
    <property type="method" value="EM"/>
    <property type="resolution" value="4.10 A"/>
    <property type="chains" value="D=500-838"/>
</dbReference>
<dbReference type="PDBsum" id="6VJZ"/>
<dbReference type="PDBsum" id="6VK0"/>
<dbReference type="EMDB" id="EMD-21221"/>
<dbReference type="EMDB" id="EMD-21222"/>
<dbReference type="SMR" id="Q03714"/>
<dbReference type="BioGRID" id="35140">
    <property type="interactions" value="138"/>
</dbReference>
<dbReference type="ComplexPortal" id="CPX-3070">
    <property type="entry name" value="HRD1 E3 ubiquitin ligase complex"/>
</dbReference>
<dbReference type="DIP" id="DIP-6423N"/>
<dbReference type="FunCoup" id="Q03714">
    <property type="interactions" value="230"/>
</dbReference>
<dbReference type="IntAct" id="Q03714">
    <property type="interactions" value="29"/>
</dbReference>
<dbReference type="MINT" id="Q03714"/>
<dbReference type="STRING" id="4932.YML029W"/>
<dbReference type="CarbonylDB" id="Q03714"/>
<dbReference type="iPTMnet" id="Q03714"/>
<dbReference type="PaxDb" id="4932-YML029W"/>
<dbReference type="PeptideAtlas" id="Q03714"/>
<dbReference type="EnsemblFungi" id="YML029W_mRNA">
    <property type="protein sequence ID" value="YML029W"/>
    <property type="gene ID" value="YML029W"/>
</dbReference>
<dbReference type="GeneID" id="854979"/>
<dbReference type="KEGG" id="sce:YML029W"/>
<dbReference type="AGR" id="SGD:S000004491"/>
<dbReference type="SGD" id="S000004491">
    <property type="gene designation" value="USA1"/>
</dbReference>
<dbReference type="VEuPathDB" id="FungiDB:YML029W"/>
<dbReference type="eggNOG" id="ENOG502QUV9">
    <property type="taxonomic scope" value="Eukaryota"/>
</dbReference>
<dbReference type="HOGENOM" id="CLU_337435_0_0_1"/>
<dbReference type="InParanoid" id="Q03714"/>
<dbReference type="OMA" id="VQINQEY"/>
<dbReference type="OrthoDB" id="4066580at2759"/>
<dbReference type="BioCyc" id="YEAST:G3O-32630-MONOMER"/>
<dbReference type="BioGRID-ORCS" id="854979">
    <property type="hits" value="0 hits in 10 CRISPR screens"/>
</dbReference>
<dbReference type="PRO" id="PR:Q03714"/>
<dbReference type="Proteomes" id="UP000002311">
    <property type="component" value="Chromosome XIII"/>
</dbReference>
<dbReference type="RNAct" id="Q03714">
    <property type="molecule type" value="protein"/>
</dbReference>
<dbReference type="GO" id="GO:0005783">
    <property type="term" value="C:endoplasmic reticulum"/>
    <property type="evidence" value="ECO:0007005"/>
    <property type="project" value="SGD"/>
</dbReference>
<dbReference type="GO" id="GO:0005789">
    <property type="term" value="C:endoplasmic reticulum membrane"/>
    <property type="evidence" value="ECO:0000353"/>
    <property type="project" value="SGD"/>
</dbReference>
<dbReference type="GO" id="GO:0000836">
    <property type="term" value="C:Hrd1p ubiquitin ligase complex"/>
    <property type="evidence" value="ECO:0000353"/>
    <property type="project" value="ComplexPortal"/>
</dbReference>
<dbReference type="GO" id="GO:0042802">
    <property type="term" value="F:identical protein binding"/>
    <property type="evidence" value="ECO:0000353"/>
    <property type="project" value="IntAct"/>
</dbReference>
<dbReference type="GO" id="GO:0060090">
    <property type="term" value="F:molecular adaptor activity"/>
    <property type="evidence" value="ECO:0000314"/>
    <property type="project" value="SGD"/>
</dbReference>
<dbReference type="GO" id="GO:0036503">
    <property type="term" value="P:ERAD pathway"/>
    <property type="evidence" value="ECO:0000315"/>
    <property type="project" value="SGD"/>
</dbReference>
<dbReference type="GO" id="GO:0000398">
    <property type="term" value="P:mRNA splicing, via spliceosome"/>
    <property type="evidence" value="ECO:0000353"/>
    <property type="project" value="SGD"/>
</dbReference>
<dbReference type="GO" id="GO:1902499">
    <property type="term" value="P:positive regulation of protein autoubiquitination"/>
    <property type="evidence" value="ECO:0000314"/>
    <property type="project" value="SGD"/>
</dbReference>
<dbReference type="CDD" id="cd22577">
    <property type="entry name" value="Usa1_DBD"/>
    <property type="match status" value="1"/>
</dbReference>
<dbReference type="Gene3D" id="3.10.20.90">
    <property type="entry name" value="Phosphatidylinositol 3-kinase Catalytic Subunit, Chain A, domain 1"/>
    <property type="match status" value="1"/>
</dbReference>
<dbReference type="InterPro" id="IPR000626">
    <property type="entry name" value="Ubiquitin-like_dom"/>
</dbReference>
<dbReference type="InterPro" id="IPR029071">
    <property type="entry name" value="Ubiquitin-like_domsf"/>
</dbReference>
<dbReference type="SUPFAM" id="SSF54236">
    <property type="entry name" value="Ubiquitin-like"/>
    <property type="match status" value="1"/>
</dbReference>
<dbReference type="PROSITE" id="PS50053">
    <property type="entry name" value="UBIQUITIN_2"/>
    <property type="match status" value="1"/>
</dbReference>
<gene>
    <name type="primary">USA1</name>
    <name type="ordered locus">YML029W</name>
</gene>
<protein>
    <recommendedName>
        <fullName>U1 SNP1-associating protein 1</fullName>
    </recommendedName>
</protein>
<sequence>MSEYLAQTPCKFTIWSSEIDLIRTNLLVNAHPLSTVGRLLQYIHYQIYKQLRAIYQPEEQCTNSEIPHTPLNSINTYFLSYEGRELSATCLLKDITSSSHPDSNHFIRLQLEKRTSPSGSAFDLEYDMEGEFNSMNIQFEINTLSSQRIFNSMEPNLPIGTTLARLEKLALERIKDFEKSAGNLCGIKEDHSVSDLQGFIIKGKQTPMFLNYGSDSDYYKDLNLVDLIGIDFAPAHNSFFTFLFKMNHEQNSHIANDEERFVLEFISDATLSITQMNVKPDTTVKQVKDFICSVYTHSLNLRRNDIKLIYKGQLLHENNFAGNSSKISEYIKEPHEVKVHVQINQEYTESGPGFWNEVFNNPNIFQFMPPDTRSQSPVSFAPTQGRSPAAIRGEERGIPYVTESGNDIVPTDELYRKCIINGDEVVFIPVSELNPQSSYLSVIKGDYGEIKIPISSNDYRINGDNILLSPSAIEQLESALNFKIERPRDSTLLHPSGEHVRAADNTSSANDNNTVENDESAWNRRVVRPLRNSFPLLLVLIRTFYLIGYNSLVPFFIILEFGSFLPWKYIILLSLLFIFRTVWNTQEVWNLWRDYLHLNEIDEVKFSQIKEFINSNSLTLNFYKKCKDTQSAIDLLMIPNLHEQRLSVYSKYDIEYDTNTPDVGQLNLLFIKVLSGEIPKDALDELFKEFFELYETTRNMNTLYPQDSLNELLLMIWKESQKKDINTLPKYRRWFQTLCSQIAEHNVLDVVLRYIIPDPVNDRVITAVIKNFVLFWVTLLPYVKEKLDDIVAQRARDREQPAPSAQQQENEDEALIIPDEEEPTATGAQPHLYIPDED</sequence>